<name>WTPC_ARCFU</name>
<organism>
    <name type="scientific">Archaeoglobus fulgidus (strain ATCC 49558 / DSM 4304 / JCM 9628 / NBRC 100126 / VC-16)</name>
    <dbReference type="NCBI Taxonomy" id="224325"/>
    <lineage>
        <taxon>Archaea</taxon>
        <taxon>Methanobacteriati</taxon>
        <taxon>Methanobacteriota</taxon>
        <taxon>Archaeoglobi</taxon>
        <taxon>Archaeoglobales</taxon>
        <taxon>Archaeoglobaceae</taxon>
        <taxon>Archaeoglobus</taxon>
    </lineage>
</organism>
<gene>
    <name type="primary">wtpC</name>
    <name type="synonym">modC</name>
    <name type="ordered locus">AF_0092</name>
</gene>
<keyword id="KW-0002">3D-structure</keyword>
<keyword id="KW-0067">ATP-binding</keyword>
<keyword id="KW-1003">Cell membrane</keyword>
<keyword id="KW-0472">Membrane</keyword>
<keyword id="KW-0500">Molybdenum</keyword>
<keyword id="KW-0547">Nucleotide-binding</keyword>
<keyword id="KW-1185">Reference proteome</keyword>
<keyword id="KW-1278">Translocase</keyword>
<keyword id="KW-0813">Transport</keyword>
<reference key="1">
    <citation type="journal article" date="1997" name="Nature">
        <title>The complete genome sequence of the hyperthermophilic, sulphate-reducing archaeon Archaeoglobus fulgidus.</title>
        <authorList>
            <person name="Klenk H.-P."/>
            <person name="Clayton R.A."/>
            <person name="Tomb J.-F."/>
            <person name="White O."/>
            <person name="Nelson K.E."/>
            <person name="Ketchum K.A."/>
            <person name="Dodson R.J."/>
            <person name="Gwinn M.L."/>
            <person name="Hickey E.K."/>
            <person name="Peterson J.D."/>
            <person name="Richardson D.L."/>
            <person name="Kerlavage A.R."/>
            <person name="Graham D.E."/>
            <person name="Kyrpides N.C."/>
            <person name="Fleischmann R.D."/>
            <person name="Quackenbush J."/>
            <person name="Lee N.H."/>
            <person name="Sutton G.G."/>
            <person name="Gill S.R."/>
            <person name="Kirkness E.F."/>
            <person name="Dougherty B.A."/>
            <person name="McKenney K."/>
            <person name="Adams M.D."/>
            <person name="Loftus B.J."/>
            <person name="Peterson S.N."/>
            <person name="Reich C.I."/>
            <person name="McNeil L.K."/>
            <person name="Badger J.H."/>
            <person name="Glodek A."/>
            <person name="Zhou L."/>
            <person name="Overbeek R."/>
            <person name="Gocayne J.D."/>
            <person name="Weidman J.F."/>
            <person name="McDonald L.A."/>
            <person name="Utterback T.R."/>
            <person name="Cotton M.D."/>
            <person name="Spriggs T."/>
            <person name="Artiach P."/>
            <person name="Kaine B.P."/>
            <person name="Sykes S.M."/>
            <person name="Sadow P.W."/>
            <person name="D'Andrea K.P."/>
            <person name="Bowman C."/>
            <person name="Fujii C."/>
            <person name="Garland S.A."/>
            <person name="Mason T.M."/>
            <person name="Olsen G.J."/>
            <person name="Fraser C.M."/>
            <person name="Smith H.O."/>
            <person name="Woese C.R."/>
            <person name="Venter J.C."/>
        </authorList>
    </citation>
    <scope>NUCLEOTIDE SEQUENCE [LARGE SCALE GENOMIC DNA]</scope>
    <source>
        <strain>ATCC 49558 / DSM 4304 / JCM 9628 / NBRC 100126 / VC-16</strain>
    </source>
</reference>
<reference key="2">
    <citation type="journal article" date="2007" name="Nature">
        <title>Structure of an ABC transporter in complex with its binding protein.</title>
        <authorList>
            <person name="Hollenstein K."/>
            <person name="Frei D.C."/>
            <person name="Locher K.P."/>
        </authorList>
    </citation>
    <scope>X-RAY CRYSTALLOGRAPHY (3.1 ANGSTROMS) OF COMPLEX WITH PHOSPHATE; WTPA AND WTPB</scope>
    <scope>SUBUNIT</scope>
</reference>
<sequence length="240" mass="27027">MFLKVRAEKRLGNFRLNVDFEMGRDYCVLLGPTGAGKSVFLELIAGIVKPDRGEVRLNGADITPLPPERRGIGFVPQDYALFPHLSVYRNIAYGLRNVERVERDRRVREMAEKLGIAHLLDRKPARLSGGERQRVALARALVIQPRLLLLDEPLSAVDLKTKGVLMEELRFVQREFDVPILHVTHDLIEAAMLADEVAVMLNGRIVEKGKLKELFSAKNGEVAEFLSARNLLLKVSKILD</sequence>
<protein>
    <recommendedName>
        <fullName>Molybdate/tungstate import ATP-binding protein WtpC</fullName>
        <ecNumber evidence="2">7.3.2.6</ecNumber>
    </recommendedName>
</protein>
<dbReference type="EC" id="7.3.2.6" evidence="2"/>
<dbReference type="EMBL" id="AE000782">
    <property type="protein sequence ID" value="AAB91137.1"/>
    <property type="molecule type" value="Genomic_DNA"/>
</dbReference>
<dbReference type="PIR" id="D69261">
    <property type="entry name" value="D69261"/>
</dbReference>
<dbReference type="RefSeq" id="WP_010877606.1">
    <property type="nucleotide sequence ID" value="NC_000917.1"/>
</dbReference>
<dbReference type="PDB" id="2ONK">
    <property type="method" value="X-ray"/>
    <property type="resolution" value="3.10 A"/>
    <property type="chains" value="A/B/F/G=1-240"/>
</dbReference>
<dbReference type="PDBsum" id="2ONK"/>
<dbReference type="SMR" id="O30144"/>
<dbReference type="DIP" id="DIP-60272N"/>
<dbReference type="IntAct" id="O30144">
    <property type="interactions" value="2"/>
</dbReference>
<dbReference type="STRING" id="224325.AF_0092"/>
<dbReference type="TCDB" id="3.A.1.6.8">
    <property type="family name" value="the atp-binding cassette (abc) superfamily"/>
</dbReference>
<dbReference type="PaxDb" id="224325-AF_0092"/>
<dbReference type="EnsemblBacteria" id="AAB91137">
    <property type="protein sequence ID" value="AAB91137"/>
    <property type="gene ID" value="AF_0092"/>
</dbReference>
<dbReference type="GeneID" id="1483304"/>
<dbReference type="KEGG" id="afu:AF_0092"/>
<dbReference type="eggNOG" id="arCOG00180">
    <property type="taxonomic scope" value="Archaea"/>
</dbReference>
<dbReference type="HOGENOM" id="CLU_000604_1_22_2"/>
<dbReference type="OrthoDB" id="18368at2157"/>
<dbReference type="PhylomeDB" id="O30144"/>
<dbReference type="BRENDA" id="7.3.2.5">
    <property type="organism ID" value="414"/>
</dbReference>
<dbReference type="EvolutionaryTrace" id="O30144"/>
<dbReference type="Proteomes" id="UP000002199">
    <property type="component" value="Chromosome"/>
</dbReference>
<dbReference type="GO" id="GO:0005886">
    <property type="term" value="C:plasma membrane"/>
    <property type="evidence" value="ECO:0007669"/>
    <property type="project" value="UniProtKB-SubCell"/>
</dbReference>
<dbReference type="GO" id="GO:1901238">
    <property type="term" value="F:ABC-type tungstate transporter activity"/>
    <property type="evidence" value="ECO:0007669"/>
    <property type="project" value="UniProtKB-EC"/>
</dbReference>
<dbReference type="GO" id="GO:0005524">
    <property type="term" value="F:ATP binding"/>
    <property type="evidence" value="ECO:0007669"/>
    <property type="project" value="UniProtKB-KW"/>
</dbReference>
<dbReference type="GO" id="GO:0016887">
    <property type="term" value="F:ATP hydrolysis activity"/>
    <property type="evidence" value="ECO:0007669"/>
    <property type="project" value="InterPro"/>
</dbReference>
<dbReference type="CDD" id="cd03299">
    <property type="entry name" value="ABC_ModC_like"/>
    <property type="match status" value="1"/>
</dbReference>
<dbReference type="Gene3D" id="3.40.50.300">
    <property type="entry name" value="P-loop containing nucleotide triphosphate hydrolases"/>
    <property type="match status" value="1"/>
</dbReference>
<dbReference type="InterPro" id="IPR003593">
    <property type="entry name" value="AAA+_ATPase"/>
</dbReference>
<dbReference type="InterPro" id="IPR050093">
    <property type="entry name" value="ABC_SmlMolc_Importer"/>
</dbReference>
<dbReference type="InterPro" id="IPR003439">
    <property type="entry name" value="ABC_transporter-like_ATP-bd"/>
</dbReference>
<dbReference type="InterPro" id="IPR017871">
    <property type="entry name" value="ABC_transporter-like_CS"/>
</dbReference>
<dbReference type="InterPro" id="IPR027417">
    <property type="entry name" value="P-loop_NTPase"/>
</dbReference>
<dbReference type="PANTHER" id="PTHR42781">
    <property type="entry name" value="SPERMIDINE/PUTRESCINE IMPORT ATP-BINDING PROTEIN POTA"/>
    <property type="match status" value="1"/>
</dbReference>
<dbReference type="PANTHER" id="PTHR42781:SF4">
    <property type="entry name" value="SPERMIDINE_PUTRESCINE IMPORT ATP-BINDING PROTEIN POTA"/>
    <property type="match status" value="1"/>
</dbReference>
<dbReference type="Pfam" id="PF00005">
    <property type="entry name" value="ABC_tran"/>
    <property type="match status" value="1"/>
</dbReference>
<dbReference type="SMART" id="SM00382">
    <property type="entry name" value="AAA"/>
    <property type="match status" value="1"/>
</dbReference>
<dbReference type="SUPFAM" id="SSF52540">
    <property type="entry name" value="P-loop containing nucleoside triphosphate hydrolases"/>
    <property type="match status" value="1"/>
</dbReference>
<dbReference type="PROSITE" id="PS00211">
    <property type="entry name" value="ABC_TRANSPORTER_1"/>
    <property type="match status" value="1"/>
</dbReference>
<dbReference type="PROSITE" id="PS50893">
    <property type="entry name" value="ABC_TRANSPORTER_2"/>
    <property type="match status" value="1"/>
</dbReference>
<proteinExistence type="evidence at protein level"/>
<accession>O30144</accession>
<evidence type="ECO:0000250" key="1"/>
<evidence type="ECO:0000250" key="2">
    <source>
        <dbReference type="UniProtKB" id="Q8U4K3"/>
    </source>
</evidence>
<evidence type="ECO:0000255" key="3">
    <source>
        <dbReference type="PROSITE-ProRule" id="PRU00434"/>
    </source>
</evidence>
<evidence type="ECO:0000269" key="4">
    <source>
    </source>
</evidence>
<evidence type="ECO:0000305" key="5"/>
<evidence type="ECO:0007829" key="6">
    <source>
        <dbReference type="PDB" id="2ONK"/>
    </source>
</evidence>
<comment type="function">
    <text evidence="5">Part of the ABC transporter complex WtpABC involved in molybdate/tungstate import. Responsible for energy coupling to the transport system (Probable).</text>
</comment>
<comment type="catalytic activity">
    <reaction evidence="2">
        <text>tungstate(in) + ATP + H2O = tungstate(out) + ADP + phosphate + H(+)</text>
        <dbReference type="Rhea" id="RHEA:35027"/>
        <dbReference type="ChEBI" id="CHEBI:15377"/>
        <dbReference type="ChEBI" id="CHEBI:15378"/>
        <dbReference type="ChEBI" id="CHEBI:30616"/>
        <dbReference type="ChEBI" id="CHEBI:43474"/>
        <dbReference type="ChEBI" id="CHEBI:46502"/>
        <dbReference type="ChEBI" id="CHEBI:456216"/>
        <dbReference type="EC" id="7.3.2.6"/>
    </reaction>
</comment>
<comment type="subunit">
    <text evidence="4">The complex is composed of two ATP-binding proteins (WtpC), two transmembrane proteins (WtpB) and a solute-binding protein (WtpA).</text>
</comment>
<comment type="interaction">
    <interactant intactId="EBI-15624339">
        <id>O30144</id>
    </interactant>
    <interactant intactId="EBI-15624357">
        <id>O30143</id>
        <label>wtpB</label>
    </interactant>
    <organismsDiffer>false</organismsDiffer>
    <experiments>2</experiments>
</comment>
<comment type="subcellular location">
    <subcellularLocation>
        <location evidence="1">Cell membrane</location>
        <topology evidence="1">Peripheral membrane protein</topology>
    </subcellularLocation>
</comment>
<comment type="similarity">
    <text evidence="5">Belongs to the ABC transporter superfamily. Sulfate/tungstate importer (TC 3.A.1.6) family.</text>
</comment>
<feature type="chain" id="PRO_0000338501" description="Molybdate/tungstate import ATP-binding protein WtpC">
    <location>
        <begin position="1"/>
        <end position="240"/>
    </location>
</feature>
<feature type="domain" description="ABC transporter" evidence="3">
    <location>
        <begin position="2"/>
        <end position="227"/>
    </location>
</feature>
<feature type="binding site" evidence="5">
    <location>
        <begin position="31"/>
        <end position="38"/>
    </location>
    <ligand>
        <name>ATP</name>
        <dbReference type="ChEBI" id="CHEBI:30616"/>
    </ligand>
</feature>
<feature type="strand" evidence="6">
    <location>
        <begin position="3"/>
        <end position="11"/>
    </location>
</feature>
<feature type="strand" evidence="6">
    <location>
        <begin position="14"/>
        <end position="22"/>
    </location>
</feature>
<feature type="strand" evidence="6">
    <location>
        <begin position="24"/>
        <end position="30"/>
    </location>
</feature>
<feature type="helix" evidence="6">
    <location>
        <begin position="37"/>
        <end position="45"/>
    </location>
</feature>
<feature type="strand" evidence="6">
    <location>
        <begin position="51"/>
        <end position="57"/>
    </location>
</feature>
<feature type="turn" evidence="6">
    <location>
        <begin position="67"/>
        <end position="69"/>
    </location>
</feature>
<feature type="helix" evidence="6">
    <location>
        <begin position="87"/>
        <end position="92"/>
    </location>
</feature>
<feature type="helix" evidence="6">
    <location>
        <begin position="100"/>
        <end position="112"/>
    </location>
</feature>
<feature type="turn" evidence="6">
    <location>
        <begin position="113"/>
        <end position="115"/>
    </location>
</feature>
<feature type="turn" evidence="6">
    <location>
        <begin position="117"/>
        <end position="121"/>
    </location>
</feature>
<feature type="helix" evidence="6">
    <location>
        <begin position="124"/>
        <end position="126"/>
    </location>
</feature>
<feature type="helix" evidence="6">
    <location>
        <begin position="129"/>
        <end position="141"/>
    </location>
</feature>
<feature type="strand" evidence="6">
    <location>
        <begin position="146"/>
        <end position="152"/>
    </location>
</feature>
<feature type="helix" evidence="6">
    <location>
        <begin position="159"/>
        <end position="176"/>
    </location>
</feature>
<feature type="strand" evidence="6">
    <location>
        <begin position="180"/>
        <end position="185"/>
    </location>
</feature>
<feature type="helix" evidence="6">
    <location>
        <begin position="187"/>
        <end position="193"/>
    </location>
</feature>
<feature type="strand" evidence="6">
    <location>
        <begin position="195"/>
        <end position="201"/>
    </location>
</feature>
<feature type="strand" evidence="6">
    <location>
        <begin position="204"/>
        <end position="209"/>
    </location>
</feature>
<feature type="helix" evidence="6">
    <location>
        <begin position="211"/>
        <end position="216"/>
    </location>
</feature>
<feature type="helix" evidence="6">
    <location>
        <begin position="222"/>
        <end position="225"/>
    </location>
</feature>
<feature type="helix" evidence="6">
    <location>
        <begin position="226"/>
        <end position="228"/>
    </location>
</feature>
<feature type="helix" evidence="6">
    <location>
        <begin position="229"/>
        <end position="238"/>
    </location>
</feature>